<feature type="chain" id="PRO_1000073507" description="dITP/XTP pyrophosphatase">
    <location>
        <begin position="1"/>
        <end position="200"/>
    </location>
</feature>
<feature type="active site" description="Proton acceptor" evidence="1">
    <location>
        <position position="73"/>
    </location>
</feature>
<feature type="binding site" evidence="1">
    <location>
        <begin position="7"/>
        <end position="12"/>
    </location>
    <ligand>
        <name>substrate</name>
    </ligand>
</feature>
<feature type="binding site" evidence="1">
    <location>
        <position position="38"/>
    </location>
    <ligand>
        <name>Mg(2+)</name>
        <dbReference type="ChEBI" id="CHEBI:18420"/>
    </ligand>
</feature>
<feature type="binding site" evidence="1">
    <location>
        <position position="73"/>
    </location>
    <ligand>
        <name>Mg(2+)</name>
        <dbReference type="ChEBI" id="CHEBI:18420"/>
    </ligand>
</feature>
<feature type="binding site" evidence="1">
    <location>
        <position position="74"/>
    </location>
    <ligand>
        <name>substrate</name>
    </ligand>
</feature>
<feature type="binding site" evidence="1">
    <location>
        <begin position="154"/>
        <end position="157"/>
    </location>
    <ligand>
        <name>substrate</name>
    </ligand>
</feature>
<feature type="binding site" evidence="1">
    <location>
        <position position="177"/>
    </location>
    <ligand>
        <name>substrate</name>
    </ligand>
</feature>
<feature type="binding site" evidence="1">
    <location>
        <begin position="182"/>
        <end position="183"/>
    </location>
    <ligand>
        <name>substrate</name>
    </ligand>
</feature>
<accession>A8FN54</accession>
<gene>
    <name type="ordered locus">C8J_1293</name>
</gene>
<organism>
    <name type="scientific">Campylobacter jejuni subsp. jejuni serotype O:6 (strain 81116 / NCTC 11828)</name>
    <dbReference type="NCBI Taxonomy" id="407148"/>
    <lineage>
        <taxon>Bacteria</taxon>
        <taxon>Pseudomonadati</taxon>
        <taxon>Campylobacterota</taxon>
        <taxon>Epsilonproteobacteria</taxon>
        <taxon>Campylobacterales</taxon>
        <taxon>Campylobacteraceae</taxon>
        <taxon>Campylobacter</taxon>
    </lineage>
</organism>
<comment type="function">
    <text evidence="1">Pyrophosphatase that catalyzes the hydrolysis of nucleoside triphosphates to their monophosphate derivatives, with a high preference for the non-canonical purine nucleotides XTP (xanthosine triphosphate), dITP (deoxyinosine triphosphate) and ITP. Seems to function as a house-cleaning enzyme that removes non-canonical purine nucleotides from the nucleotide pool, thus preventing their incorporation into DNA/RNA and avoiding chromosomal lesions.</text>
</comment>
<comment type="catalytic activity">
    <reaction evidence="1">
        <text>XTP + H2O = XMP + diphosphate + H(+)</text>
        <dbReference type="Rhea" id="RHEA:28610"/>
        <dbReference type="ChEBI" id="CHEBI:15377"/>
        <dbReference type="ChEBI" id="CHEBI:15378"/>
        <dbReference type="ChEBI" id="CHEBI:33019"/>
        <dbReference type="ChEBI" id="CHEBI:57464"/>
        <dbReference type="ChEBI" id="CHEBI:61314"/>
        <dbReference type="EC" id="3.6.1.66"/>
    </reaction>
</comment>
<comment type="catalytic activity">
    <reaction evidence="1">
        <text>dITP + H2O = dIMP + diphosphate + H(+)</text>
        <dbReference type="Rhea" id="RHEA:28342"/>
        <dbReference type="ChEBI" id="CHEBI:15377"/>
        <dbReference type="ChEBI" id="CHEBI:15378"/>
        <dbReference type="ChEBI" id="CHEBI:33019"/>
        <dbReference type="ChEBI" id="CHEBI:61194"/>
        <dbReference type="ChEBI" id="CHEBI:61382"/>
        <dbReference type="EC" id="3.6.1.66"/>
    </reaction>
</comment>
<comment type="catalytic activity">
    <reaction evidence="1">
        <text>ITP + H2O = IMP + diphosphate + H(+)</text>
        <dbReference type="Rhea" id="RHEA:29399"/>
        <dbReference type="ChEBI" id="CHEBI:15377"/>
        <dbReference type="ChEBI" id="CHEBI:15378"/>
        <dbReference type="ChEBI" id="CHEBI:33019"/>
        <dbReference type="ChEBI" id="CHEBI:58053"/>
        <dbReference type="ChEBI" id="CHEBI:61402"/>
        <dbReference type="EC" id="3.6.1.66"/>
    </reaction>
</comment>
<comment type="cofactor">
    <cofactor evidence="1">
        <name>Mg(2+)</name>
        <dbReference type="ChEBI" id="CHEBI:18420"/>
    </cofactor>
    <text evidence="1">Binds 1 Mg(2+) ion per subunit.</text>
</comment>
<comment type="subunit">
    <text evidence="1">Homodimer.</text>
</comment>
<comment type="similarity">
    <text evidence="1">Belongs to the HAM1 NTPase family.</text>
</comment>
<dbReference type="EC" id="3.6.1.66" evidence="1"/>
<dbReference type="EMBL" id="CP000814">
    <property type="protein sequence ID" value="ABV52891.1"/>
    <property type="molecule type" value="Genomic_DNA"/>
</dbReference>
<dbReference type="SMR" id="A8FN54"/>
<dbReference type="KEGG" id="cju:C8J_1293"/>
<dbReference type="HOGENOM" id="CLU_082080_0_2_7"/>
<dbReference type="GO" id="GO:0005829">
    <property type="term" value="C:cytosol"/>
    <property type="evidence" value="ECO:0007669"/>
    <property type="project" value="TreeGrafter"/>
</dbReference>
<dbReference type="GO" id="GO:0035870">
    <property type="term" value="F:dITP diphosphatase activity"/>
    <property type="evidence" value="ECO:0007669"/>
    <property type="project" value="RHEA"/>
</dbReference>
<dbReference type="GO" id="GO:0036220">
    <property type="term" value="F:ITP diphosphatase activity"/>
    <property type="evidence" value="ECO:0007669"/>
    <property type="project" value="UniProtKB-EC"/>
</dbReference>
<dbReference type="GO" id="GO:0046872">
    <property type="term" value="F:metal ion binding"/>
    <property type="evidence" value="ECO:0007669"/>
    <property type="project" value="UniProtKB-KW"/>
</dbReference>
<dbReference type="GO" id="GO:0000166">
    <property type="term" value="F:nucleotide binding"/>
    <property type="evidence" value="ECO:0007669"/>
    <property type="project" value="UniProtKB-KW"/>
</dbReference>
<dbReference type="GO" id="GO:0017111">
    <property type="term" value="F:ribonucleoside triphosphate phosphatase activity"/>
    <property type="evidence" value="ECO:0007669"/>
    <property type="project" value="InterPro"/>
</dbReference>
<dbReference type="GO" id="GO:0036222">
    <property type="term" value="F:XTP diphosphatase activity"/>
    <property type="evidence" value="ECO:0007669"/>
    <property type="project" value="RHEA"/>
</dbReference>
<dbReference type="GO" id="GO:0009117">
    <property type="term" value="P:nucleotide metabolic process"/>
    <property type="evidence" value="ECO:0007669"/>
    <property type="project" value="UniProtKB-KW"/>
</dbReference>
<dbReference type="GO" id="GO:0009146">
    <property type="term" value="P:purine nucleoside triphosphate catabolic process"/>
    <property type="evidence" value="ECO:0007669"/>
    <property type="project" value="UniProtKB-UniRule"/>
</dbReference>
<dbReference type="CDD" id="cd00515">
    <property type="entry name" value="HAM1"/>
    <property type="match status" value="1"/>
</dbReference>
<dbReference type="FunFam" id="3.90.950.10:FF:000001">
    <property type="entry name" value="dITP/XTP pyrophosphatase"/>
    <property type="match status" value="1"/>
</dbReference>
<dbReference type="Gene3D" id="3.90.950.10">
    <property type="match status" value="1"/>
</dbReference>
<dbReference type="HAMAP" id="MF_01405">
    <property type="entry name" value="Non_canon_purine_NTPase"/>
    <property type="match status" value="1"/>
</dbReference>
<dbReference type="InterPro" id="IPR020922">
    <property type="entry name" value="dITP/XTP_pyrophosphatase"/>
</dbReference>
<dbReference type="InterPro" id="IPR029001">
    <property type="entry name" value="ITPase-like_fam"/>
</dbReference>
<dbReference type="InterPro" id="IPR002637">
    <property type="entry name" value="RdgB/HAM1"/>
</dbReference>
<dbReference type="NCBIfam" id="TIGR00042">
    <property type="entry name" value="RdgB/HAM1 family non-canonical purine NTP pyrophosphatase"/>
    <property type="match status" value="1"/>
</dbReference>
<dbReference type="PANTHER" id="PTHR11067:SF9">
    <property type="entry name" value="INOSINE TRIPHOSPHATE PYROPHOSPHATASE"/>
    <property type="match status" value="1"/>
</dbReference>
<dbReference type="PANTHER" id="PTHR11067">
    <property type="entry name" value="INOSINE TRIPHOSPHATE PYROPHOSPHATASE/HAM1 PROTEIN"/>
    <property type="match status" value="1"/>
</dbReference>
<dbReference type="Pfam" id="PF01725">
    <property type="entry name" value="Ham1p_like"/>
    <property type="match status" value="1"/>
</dbReference>
<dbReference type="SUPFAM" id="SSF52972">
    <property type="entry name" value="ITPase-like"/>
    <property type="match status" value="1"/>
</dbReference>
<evidence type="ECO:0000255" key="1">
    <source>
        <dbReference type="HAMAP-Rule" id="MF_01405"/>
    </source>
</evidence>
<keyword id="KW-0378">Hydrolase</keyword>
<keyword id="KW-0460">Magnesium</keyword>
<keyword id="KW-0479">Metal-binding</keyword>
<keyword id="KW-0546">Nucleotide metabolism</keyword>
<keyword id="KW-0547">Nucleotide-binding</keyword>
<proteinExistence type="inferred from homology"/>
<protein>
    <recommendedName>
        <fullName evidence="1">dITP/XTP pyrophosphatase</fullName>
        <ecNumber evidence="1">3.6.1.66</ecNumber>
    </recommendedName>
    <alternativeName>
        <fullName evidence="1">Non-canonical purine NTP pyrophosphatase</fullName>
    </alternativeName>
    <alternativeName>
        <fullName evidence="1">Non-standard purine NTP pyrophosphatase</fullName>
    </alternativeName>
    <alternativeName>
        <fullName evidence="1">Nucleoside-triphosphate diphosphatase</fullName>
    </alternativeName>
    <alternativeName>
        <fullName evidence="1">Nucleoside-triphosphate pyrophosphatase</fullName>
        <shortName evidence="1">NTPase</shortName>
    </alternativeName>
</protein>
<reference key="1">
    <citation type="journal article" date="2007" name="J. Bacteriol.">
        <title>The complete genome sequence of Campylobacter jejuni strain 81116 (NCTC11828).</title>
        <authorList>
            <person name="Pearson B.M."/>
            <person name="Gaskin D.J.H."/>
            <person name="Segers R.P.A.M."/>
            <person name="Wells J.M."/>
            <person name="Nuijten P.J.M."/>
            <person name="van Vliet A.H.M."/>
        </authorList>
    </citation>
    <scope>NUCLEOTIDE SEQUENCE [LARGE SCALE GENOMIC DNA]</scope>
    <source>
        <strain>81116 / NCTC 11828</strain>
    </source>
</reference>
<name>IXTPA_CAMJ8</name>
<sequence>MKIILATSNKHKVLELKEILKDFEIYAFDEVLMPFEIEENGKTFKENALIKARAVFNALDEKQKKDFIALSDDSGICVDVLEGNPGIYSARFSDKGDDKSNRDKLVNEMIKKGFNQSRAHYVAAIAMVGLMGEFSTHGTMHGKVIDTEKGENGFGYDSLFIPKGFDKTLAQLSVDEKNNISHRFKALELAKIILKILNKG</sequence>